<comment type="function">
    <text evidence="1">NAD-binding protein involved in the addition of a carboxymethylaminomethyl (cmnm) group at the wobble position (U34) of certain tRNAs, forming tRNA-cmnm(5)s(2)U34.</text>
</comment>
<comment type="cofactor">
    <cofactor evidence="1">
        <name>FAD</name>
        <dbReference type="ChEBI" id="CHEBI:57692"/>
    </cofactor>
</comment>
<comment type="subunit">
    <text evidence="1">Homodimer. Heterotetramer of two MnmE and two MnmG subunits.</text>
</comment>
<comment type="subcellular location">
    <subcellularLocation>
        <location evidence="1">Cytoplasm</location>
    </subcellularLocation>
</comment>
<comment type="similarity">
    <text evidence="1">Belongs to the MnmG family.</text>
</comment>
<dbReference type="EMBL" id="CP000097">
    <property type="protein sequence ID" value="ABB27155.1"/>
    <property type="molecule type" value="Genomic_DNA"/>
</dbReference>
<dbReference type="RefSeq" id="WP_011360933.1">
    <property type="nucleotide sequence ID" value="NC_007513.1"/>
</dbReference>
<dbReference type="SMR" id="Q3AUG9"/>
<dbReference type="STRING" id="316279.Syncc9902_2197"/>
<dbReference type="KEGG" id="sye:Syncc9902_2197"/>
<dbReference type="eggNOG" id="COG0445">
    <property type="taxonomic scope" value="Bacteria"/>
</dbReference>
<dbReference type="HOGENOM" id="CLU_007831_2_2_3"/>
<dbReference type="OrthoDB" id="9815560at2"/>
<dbReference type="Proteomes" id="UP000002712">
    <property type="component" value="Chromosome"/>
</dbReference>
<dbReference type="GO" id="GO:0005737">
    <property type="term" value="C:cytoplasm"/>
    <property type="evidence" value="ECO:0007669"/>
    <property type="project" value="UniProtKB-SubCell"/>
</dbReference>
<dbReference type="GO" id="GO:0050660">
    <property type="term" value="F:flavin adenine dinucleotide binding"/>
    <property type="evidence" value="ECO:0007669"/>
    <property type="project" value="UniProtKB-UniRule"/>
</dbReference>
<dbReference type="GO" id="GO:0030488">
    <property type="term" value="P:tRNA methylation"/>
    <property type="evidence" value="ECO:0007669"/>
    <property type="project" value="TreeGrafter"/>
</dbReference>
<dbReference type="GO" id="GO:0002098">
    <property type="term" value="P:tRNA wobble uridine modification"/>
    <property type="evidence" value="ECO:0007669"/>
    <property type="project" value="InterPro"/>
</dbReference>
<dbReference type="FunFam" id="1.10.10.1800:FF:000001">
    <property type="entry name" value="tRNA uridine 5-carboxymethylaminomethyl modification enzyme MnmG"/>
    <property type="match status" value="1"/>
</dbReference>
<dbReference type="FunFam" id="1.10.150.570:FF:000001">
    <property type="entry name" value="tRNA uridine 5-carboxymethylaminomethyl modification enzyme MnmG"/>
    <property type="match status" value="1"/>
</dbReference>
<dbReference type="FunFam" id="3.50.50.60:FF:000002">
    <property type="entry name" value="tRNA uridine 5-carboxymethylaminomethyl modification enzyme MnmG"/>
    <property type="match status" value="1"/>
</dbReference>
<dbReference type="FunFam" id="3.50.50.60:FF:000119">
    <property type="entry name" value="tRNA uridine 5-carboxymethylaminomethyl modification enzyme MnmG"/>
    <property type="match status" value="1"/>
</dbReference>
<dbReference type="Gene3D" id="3.50.50.60">
    <property type="entry name" value="FAD/NAD(P)-binding domain"/>
    <property type="match status" value="2"/>
</dbReference>
<dbReference type="Gene3D" id="1.10.150.570">
    <property type="entry name" value="GidA associated domain, C-terminal subdomain"/>
    <property type="match status" value="1"/>
</dbReference>
<dbReference type="Gene3D" id="1.10.10.1800">
    <property type="entry name" value="tRNA uridine 5-carboxymethylaminomethyl modification enzyme MnmG/GidA"/>
    <property type="match status" value="1"/>
</dbReference>
<dbReference type="HAMAP" id="MF_00129">
    <property type="entry name" value="MnmG_GidA"/>
    <property type="match status" value="1"/>
</dbReference>
<dbReference type="InterPro" id="IPR036188">
    <property type="entry name" value="FAD/NAD-bd_sf"/>
</dbReference>
<dbReference type="InterPro" id="IPR049312">
    <property type="entry name" value="GIDA_C_N"/>
</dbReference>
<dbReference type="InterPro" id="IPR004416">
    <property type="entry name" value="MnmG"/>
</dbReference>
<dbReference type="InterPro" id="IPR002218">
    <property type="entry name" value="MnmG-rel"/>
</dbReference>
<dbReference type="InterPro" id="IPR020595">
    <property type="entry name" value="MnmG-rel_CS"/>
</dbReference>
<dbReference type="InterPro" id="IPR026904">
    <property type="entry name" value="MnmG_C"/>
</dbReference>
<dbReference type="InterPro" id="IPR047001">
    <property type="entry name" value="MnmG_C_subdom"/>
</dbReference>
<dbReference type="InterPro" id="IPR044920">
    <property type="entry name" value="MnmG_C_subdom_sf"/>
</dbReference>
<dbReference type="InterPro" id="IPR040131">
    <property type="entry name" value="MnmG_N"/>
</dbReference>
<dbReference type="NCBIfam" id="TIGR00136">
    <property type="entry name" value="mnmG_gidA"/>
    <property type="match status" value="1"/>
</dbReference>
<dbReference type="PANTHER" id="PTHR11806">
    <property type="entry name" value="GLUCOSE INHIBITED DIVISION PROTEIN A"/>
    <property type="match status" value="1"/>
</dbReference>
<dbReference type="PANTHER" id="PTHR11806:SF0">
    <property type="entry name" value="PROTEIN MTO1 HOMOLOG, MITOCHONDRIAL"/>
    <property type="match status" value="1"/>
</dbReference>
<dbReference type="Pfam" id="PF01134">
    <property type="entry name" value="GIDA"/>
    <property type="match status" value="1"/>
</dbReference>
<dbReference type="Pfam" id="PF21680">
    <property type="entry name" value="GIDA_C_1st"/>
    <property type="match status" value="1"/>
</dbReference>
<dbReference type="Pfam" id="PF13932">
    <property type="entry name" value="SAM_GIDA_C"/>
    <property type="match status" value="1"/>
</dbReference>
<dbReference type="SMART" id="SM01228">
    <property type="entry name" value="GIDA_assoc_3"/>
    <property type="match status" value="1"/>
</dbReference>
<dbReference type="SUPFAM" id="SSF51905">
    <property type="entry name" value="FAD/NAD(P)-binding domain"/>
    <property type="match status" value="1"/>
</dbReference>
<dbReference type="PROSITE" id="PS01280">
    <property type="entry name" value="GIDA_1"/>
    <property type="match status" value="1"/>
</dbReference>
<dbReference type="PROSITE" id="PS01281">
    <property type="entry name" value="GIDA_2"/>
    <property type="match status" value="1"/>
</dbReference>
<organism>
    <name type="scientific">Synechococcus sp. (strain CC9902)</name>
    <dbReference type="NCBI Taxonomy" id="316279"/>
    <lineage>
        <taxon>Bacteria</taxon>
        <taxon>Bacillati</taxon>
        <taxon>Cyanobacteriota</taxon>
        <taxon>Cyanophyceae</taxon>
        <taxon>Synechococcales</taxon>
        <taxon>Synechococcaceae</taxon>
        <taxon>Synechococcus</taxon>
    </lineage>
</organism>
<feature type="chain" id="PRO_1000016702" description="tRNA uridine 5-carboxymethylaminomethyl modification enzyme MnmG">
    <location>
        <begin position="1"/>
        <end position="641"/>
    </location>
</feature>
<feature type="binding site" evidence="1">
    <location>
        <begin position="17"/>
        <end position="22"/>
    </location>
    <ligand>
        <name>FAD</name>
        <dbReference type="ChEBI" id="CHEBI:57692"/>
    </ligand>
</feature>
<feature type="binding site" evidence="1">
    <location>
        <begin position="281"/>
        <end position="295"/>
    </location>
    <ligand>
        <name>NAD(+)</name>
        <dbReference type="ChEBI" id="CHEBI:57540"/>
    </ligand>
</feature>
<protein>
    <recommendedName>
        <fullName evidence="1">tRNA uridine 5-carboxymethylaminomethyl modification enzyme MnmG</fullName>
    </recommendedName>
    <alternativeName>
        <fullName evidence="1">Glucose-inhibited division protein A</fullName>
    </alternativeName>
</protein>
<keyword id="KW-0963">Cytoplasm</keyword>
<keyword id="KW-0274">FAD</keyword>
<keyword id="KW-0285">Flavoprotein</keyword>
<keyword id="KW-0520">NAD</keyword>
<keyword id="KW-1185">Reference proteome</keyword>
<keyword id="KW-0819">tRNA processing</keyword>
<name>MNMG_SYNS9</name>
<gene>
    <name evidence="1" type="primary">mnmG</name>
    <name evidence="1" type="synonym">gidA</name>
    <name type="ordered locus">Syncc9902_2197</name>
</gene>
<proteinExistence type="inferred from homology"/>
<reference key="1">
    <citation type="submission" date="2005-08" db="EMBL/GenBank/DDBJ databases">
        <title>Complete sequence of Synechococcus sp. CC9902.</title>
        <authorList>
            <person name="Copeland A."/>
            <person name="Lucas S."/>
            <person name="Lapidus A."/>
            <person name="Barry K."/>
            <person name="Detter J.C."/>
            <person name="Glavina T."/>
            <person name="Hammon N."/>
            <person name="Israni S."/>
            <person name="Pitluck S."/>
            <person name="Martinez M."/>
            <person name="Schmutz J."/>
            <person name="Larimer F."/>
            <person name="Land M."/>
            <person name="Kyrpides N."/>
            <person name="Ivanova N."/>
            <person name="Richardson P."/>
        </authorList>
    </citation>
    <scope>NUCLEOTIDE SEQUENCE [LARGE SCALE GENOMIC DNA]</scope>
    <source>
        <strain>CC9902</strain>
    </source>
</reference>
<evidence type="ECO:0000255" key="1">
    <source>
        <dbReference type="HAMAP-Rule" id="MF_00129"/>
    </source>
</evidence>
<accession>Q3AUG9</accession>
<sequence length="641" mass="70402">MSFTAAPTESFDVIVVGGGHAGCEAAITTARLGLNTALFSLNLDRIAWQPCNPAVGGPAKSQLVHEVDALGGVIGRLADATAIQKRTLNASRGPAVWALRAQTDKRLYSRQMLQLLQHTPNLALREAMVTGLEVEGEEEQQRIQGVRTYFGSVYAAQAVVLTAGTFLGGRIWVGHQSMAAGRAGEQAAEGLTETLQGLGFHTDRLKTGTPARVDRRSIALDQLEEQPSDAADRFFSFDPAAWVSGEQMSCHITRTTAETHQLIRDNLHLTAIYGGVIDSKGPRYCPSIEDKIVRFADKESHQIFLEPEGRDTPEIYVQGFSTGLPEPIQLQLLRSLPGLEQAVMLRPAYSVDYDYLPATQLKPSLETKRVSGLFSAGQLNGTTGYEEAAAQGLVAGLNAARLIGEQDPVYFPREGSYIGTMIDDLVSQDLREPYRVLTSRSEYRLILRGDNADRRLTPLGRDLGLIDDRRWQLFEEKLQAMDAEKKRLESTRLKVSDPIAPTVEEETGAPIKGSITLADLLRRPAMHAADLVRHGLADGDLPLPVREGAEIDIKYSGYLQRQQQQIDQVKRQSQRKLPSDLNYTNIGTLSNEAREKLSAIQPTTLGQANRIPGVSQADITALLMWLELQKRQPLAPTTQAR</sequence>